<reference key="1">
    <citation type="journal article" date="2003" name="Proc. Natl. Acad. Sci. U.S.A.">
        <title>The complete genome sequence of Chromobacterium violaceum reveals remarkable and exploitable bacterial adaptability.</title>
        <authorList>
            <person name="Vasconcelos A.T.R."/>
            <person name="de Almeida D.F."/>
            <person name="Hungria M."/>
            <person name="Guimaraes C.T."/>
            <person name="Antonio R.V."/>
            <person name="Almeida F.C."/>
            <person name="de Almeida L.G.P."/>
            <person name="de Almeida R."/>
            <person name="Alves-Gomes J.A."/>
            <person name="Andrade E.M."/>
            <person name="Araripe J."/>
            <person name="de Araujo M.F.F."/>
            <person name="Astolfi-Filho S."/>
            <person name="Azevedo V."/>
            <person name="Baptista A.J."/>
            <person name="Bataus L.A.M."/>
            <person name="Batista J.S."/>
            <person name="Belo A."/>
            <person name="van den Berg C."/>
            <person name="Bogo M."/>
            <person name="Bonatto S."/>
            <person name="Bordignon J."/>
            <person name="Brigido M.M."/>
            <person name="Brito C.A."/>
            <person name="Brocchi M."/>
            <person name="Burity H.A."/>
            <person name="Camargo A.A."/>
            <person name="Cardoso D.D.P."/>
            <person name="Carneiro N.P."/>
            <person name="Carraro D.M."/>
            <person name="Carvalho C.M.B."/>
            <person name="Cascardo J.C.M."/>
            <person name="Cavada B.S."/>
            <person name="Chueire L.M.O."/>
            <person name="Creczynski-Pasa T.B."/>
            <person name="Cunha-Junior N.C."/>
            <person name="Fagundes N."/>
            <person name="Falcao C.L."/>
            <person name="Fantinatti F."/>
            <person name="Farias I.P."/>
            <person name="Felipe M.S.S."/>
            <person name="Ferrari L.P."/>
            <person name="Ferro J.A."/>
            <person name="Ferro M.I.T."/>
            <person name="Franco G.R."/>
            <person name="Freitas N.S.A."/>
            <person name="Furlan L.R."/>
            <person name="Gazzinelli R.T."/>
            <person name="Gomes E.A."/>
            <person name="Goncalves P.R."/>
            <person name="Grangeiro T.B."/>
            <person name="Grattapaglia D."/>
            <person name="Grisard E.C."/>
            <person name="Hanna E.S."/>
            <person name="Jardim S.N."/>
            <person name="Laurino J."/>
            <person name="Leoi L.C.T."/>
            <person name="Lima L.F.A."/>
            <person name="Loureiro M.F."/>
            <person name="Lyra M.C.C.P."/>
            <person name="Madeira H.M.F."/>
            <person name="Manfio G.P."/>
            <person name="Maranhao A.Q."/>
            <person name="Martins W.S."/>
            <person name="di Mauro S.M.Z."/>
            <person name="de Medeiros S.R.B."/>
            <person name="Meissner R.V."/>
            <person name="Moreira M.A.M."/>
            <person name="Nascimento F.F."/>
            <person name="Nicolas M.F."/>
            <person name="Oliveira J.G."/>
            <person name="Oliveira S.C."/>
            <person name="Paixao R.F.C."/>
            <person name="Parente J.A."/>
            <person name="Pedrosa F.O."/>
            <person name="Pena S.D.J."/>
            <person name="Pereira J.O."/>
            <person name="Pereira M."/>
            <person name="Pinto L.S.R.C."/>
            <person name="Pinto L.S."/>
            <person name="Porto J.I.R."/>
            <person name="Potrich D.P."/>
            <person name="Ramalho-Neto C.E."/>
            <person name="Reis A.M.M."/>
            <person name="Rigo L.U."/>
            <person name="Rondinelli E."/>
            <person name="Santos E.B.P."/>
            <person name="Santos F.R."/>
            <person name="Schneider M.P.C."/>
            <person name="Seuanez H.N."/>
            <person name="Silva A.M.R."/>
            <person name="da Silva A.L.C."/>
            <person name="Silva D.W."/>
            <person name="Silva R."/>
            <person name="Simoes I.C."/>
            <person name="Simon D."/>
            <person name="Soares C.M.A."/>
            <person name="Soares R.B.A."/>
            <person name="Souza E.M."/>
            <person name="Souza K.R.L."/>
            <person name="Souza R.C."/>
            <person name="Steffens M.B.R."/>
            <person name="Steindel M."/>
            <person name="Teixeira S.R."/>
            <person name="Urmenyi T."/>
            <person name="Vettore A."/>
            <person name="Wassem R."/>
            <person name="Zaha A."/>
            <person name="Simpson A.J.G."/>
        </authorList>
    </citation>
    <scope>NUCLEOTIDE SEQUENCE [LARGE SCALE GENOMIC DNA]</scope>
    <source>
        <strain>ATCC 12472 / DSM 30191 / JCM 1249 / CCUG 213 / NBRC 12614 / NCIMB 9131 / NCTC 9757 / MK</strain>
    </source>
</reference>
<gene>
    <name evidence="1" type="primary">pdxJ</name>
    <name type="ordered locus">CV_2070</name>
</gene>
<organism>
    <name type="scientific">Chromobacterium violaceum (strain ATCC 12472 / DSM 30191 / JCM 1249 / CCUG 213 / NBRC 12614 / NCIMB 9131 / NCTC 9757 / MK)</name>
    <dbReference type="NCBI Taxonomy" id="243365"/>
    <lineage>
        <taxon>Bacteria</taxon>
        <taxon>Pseudomonadati</taxon>
        <taxon>Pseudomonadota</taxon>
        <taxon>Betaproteobacteria</taxon>
        <taxon>Neisseriales</taxon>
        <taxon>Chromobacteriaceae</taxon>
        <taxon>Chromobacterium</taxon>
    </lineage>
</organism>
<protein>
    <recommendedName>
        <fullName evidence="1">Pyridoxine 5'-phosphate synthase</fullName>
        <shortName evidence="1">PNP synthase</shortName>
        <ecNumber evidence="1">2.6.99.2</ecNumber>
    </recommendedName>
</protein>
<proteinExistence type="inferred from homology"/>
<name>PDXJ_CHRVO</name>
<evidence type="ECO:0000255" key="1">
    <source>
        <dbReference type="HAMAP-Rule" id="MF_00279"/>
    </source>
</evidence>
<feature type="chain" id="PRO_0000231798" description="Pyridoxine 5'-phosphate synthase">
    <location>
        <begin position="1"/>
        <end position="242"/>
    </location>
</feature>
<feature type="active site" description="Proton acceptor" evidence="1">
    <location>
        <position position="43"/>
    </location>
</feature>
<feature type="active site" description="Proton acceptor" evidence="1">
    <location>
        <position position="70"/>
    </location>
</feature>
<feature type="active site" description="Proton donor" evidence="1">
    <location>
        <position position="191"/>
    </location>
</feature>
<feature type="binding site" evidence="1">
    <location>
        <position position="7"/>
    </location>
    <ligand>
        <name>3-amino-2-oxopropyl phosphate</name>
        <dbReference type="ChEBI" id="CHEBI:57279"/>
    </ligand>
</feature>
<feature type="binding site" evidence="1">
    <location>
        <begin position="9"/>
        <end position="10"/>
    </location>
    <ligand>
        <name>1-deoxy-D-xylulose 5-phosphate</name>
        <dbReference type="ChEBI" id="CHEBI:57792"/>
    </ligand>
</feature>
<feature type="binding site" evidence="1">
    <location>
        <position position="18"/>
    </location>
    <ligand>
        <name>3-amino-2-oxopropyl phosphate</name>
        <dbReference type="ChEBI" id="CHEBI:57279"/>
    </ligand>
</feature>
<feature type="binding site" evidence="1">
    <location>
        <position position="45"/>
    </location>
    <ligand>
        <name>1-deoxy-D-xylulose 5-phosphate</name>
        <dbReference type="ChEBI" id="CHEBI:57792"/>
    </ligand>
</feature>
<feature type="binding site" evidence="1">
    <location>
        <position position="50"/>
    </location>
    <ligand>
        <name>1-deoxy-D-xylulose 5-phosphate</name>
        <dbReference type="ChEBI" id="CHEBI:57792"/>
    </ligand>
</feature>
<feature type="binding site" evidence="1">
    <location>
        <position position="100"/>
    </location>
    <ligand>
        <name>1-deoxy-D-xylulose 5-phosphate</name>
        <dbReference type="ChEBI" id="CHEBI:57792"/>
    </ligand>
</feature>
<feature type="binding site" evidence="1">
    <location>
        <position position="192"/>
    </location>
    <ligand>
        <name>3-amino-2-oxopropyl phosphate</name>
        <dbReference type="ChEBI" id="CHEBI:57279"/>
    </ligand>
</feature>
<feature type="binding site" evidence="1">
    <location>
        <begin position="213"/>
        <end position="214"/>
    </location>
    <ligand>
        <name>3-amino-2-oxopropyl phosphate</name>
        <dbReference type="ChEBI" id="CHEBI:57279"/>
    </ligand>
</feature>
<feature type="site" description="Transition state stabilizer" evidence="1">
    <location>
        <position position="151"/>
    </location>
</feature>
<keyword id="KW-0963">Cytoplasm</keyword>
<keyword id="KW-0664">Pyridoxine biosynthesis</keyword>
<keyword id="KW-1185">Reference proteome</keyword>
<keyword id="KW-0808">Transferase</keyword>
<accession>Q7NWC0</accession>
<comment type="function">
    <text evidence="1">Catalyzes the complicated ring closure reaction between the two acyclic compounds 1-deoxy-D-xylulose-5-phosphate (DXP) and 3-amino-2-oxopropyl phosphate (1-amino-acetone-3-phosphate or AAP) to form pyridoxine 5'-phosphate (PNP) and inorganic phosphate.</text>
</comment>
<comment type="catalytic activity">
    <reaction evidence="1">
        <text>3-amino-2-oxopropyl phosphate + 1-deoxy-D-xylulose 5-phosphate = pyridoxine 5'-phosphate + phosphate + 2 H2O + H(+)</text>
        <dbReference type="Rhea" id="RHEA:15265"/>
        <dbReference type="ChEBI" id="CHEBI:15377"/>
        <dbReference type="ChEBI" id="CHEBI:15378"/>
        <dbReference type="ChEBI" id="CHEBI:43474"/>
        <dbReference type="ChEBI" id="CHEBI:57279"/>
        <dbReference type="ChEBI" id="CHEBI:57792"/>
        <dbReference type="ChEBI" id="CHEBI:58589"/>
        <dbReference type="EC" id="2.6.99.2"/>
    </reaction>
</comment>
<comment type="pathway">
    <text evidence="1">Cofactor biosynthesis; pyridoxine 5'-phosphate biosynthesis; pyridoxine 5'-phosphate from D-erythrose 4-phosphate: step 5/5.</text>
</comment>
<comment type="subunit">
    <text evidence="1">Homooctamer; tetramer of dimers.</text>
</comment>
<comment type="subcellular location">
    <subcellularLocation>
        <location evidence="1">Cytoplasm</location>
    </subcellularLocation>
</comment>
<comment type="similarity">
    <text evidence="1">Belongs to the PNP synthase family.</text>
</comment>
<sequence>MILLGVNIDHVATLRQARGTRYPSPVEAALVAESSGADLITLHLREDRRHIQDADVKAMRPVLKTRMNLEMAMTPEMLAHALQVAPEDVCLVPEKREEVTTEGGLDVRGHYADVKHYTGKLTEAGIRVSIFIDPDREQIQKAFDAGARVIELHTGAYADAPHASEREAELARIREAAEFGASLGMVVNAGHGLNYHNVKPIAAIPQIAELNIGHAIVAHALFVGFPQAVREMKALMESARAR</sequence>
<dbReference type="EC" id="2.6.99.2" evidence="1"/>
<dbReference type="EMBL" id="AE016825">
    <property type="protein sequence ID" value="AAQ59742.1"/>
    <property type="molecule type" value="Genomic_DNA"/>
</dbReference>
<dbReference type="RefSeq" id="WP_011135618.1">
    <property type="nucleotide sequence ID" value="NC_005085.1"/>
</dbReference>
<dbReference type="SMR" id="Q7NWC0"/>
<dbReference type="STRING" id="243365.CV_2070"/>
<dbReference type="KEGG" id="cvi:CV_2070"/>
<dbReference type="eggNOG" id="COG0854">
    <property type="taxonomic scope" value="Bacteria"/>
</dbReference>
<dbReference type="HOGENOM" id="CLU_074563_0_0_4"/>
<dbReference type="OrthoDB" id="9806590at2"/>
<dbReference type="UniPathway" id="UPA00244">
    <property type="reaction ID" value="UER00313"/>
</dbReference>
<dbReference type="Proteomes" id="UP000001424">
    <property type="component" value="Chromosome"/>
</dbReference>
<dbReference type="GO" id="GO:0005829">
    <property type="term" value="C:cytosol"/>
    <property type="evidence" value="ECO:0007669"/>
    <property type="project" value="TreeGrafter"/>
</dbReference>
<dbReference type="GO" id="GO:0033856">
    <property type="term" value="F:pyridoxine 5'-phosphate synthase activity"/>
    <property type="evidence" value="ECO:0007669"/>
    <property type="project" value="UniProtKB-EC"/>
</dbReference>
<dbReference type="GO" id="GO:0008615">
    <property type="term" value="P:pyridoxine biosynthetic process"/>
    <property type="evidence" value="ECO:0007669"/>
    <property type="project" value="UniProtKB-UniRule"/>
</dbReference>
<dbReference type="CDD" id="cd00003">
    <property type="entry name" value="PNPsynthase"/>
    <property type="match status" value="1"/>
</dbReference>
<dbReference type="FunFam" id="3.20.20.70:FF:000042">
    <property type="entry name" value="Pyridoxine 5'-phosphate synthase"/>
    <property type="match status" value="1"/>
</dbReference>
<dbReference type="Gene3D" id="3.20.20.70">
    <property type="entry name" value="Aldolase class I"/>
    <property type="match status" value="1"/>
</dbReference>
<dbReference type="HAMAP" id="MF_00279">
    <property type="entry name" value="PdxJ"/>
    <property type="match status" value="1"/>
</dbReference>
<dbReference type="InterPro" id="IPR013785">
    <property type="entry name" value="Aldolase_TIM"/>
</dbReference>
<dbReference type="InterPro" id="IPR004569">
    <property type="entry name" value="PyrdxlP_synth_PdxJ"/>
</dbReference>
<dbReference type="InterPro" id="IPR036130">
    <property type="entry name" value="Pyridoxine-5'_phos_synth"/>
</dbReference>
<dbReference type="NCBIfam" id="TIGR00559">
    <property type="entry name" value="pdxJ"/>
    <property type="match status" value="1"/>
</dbReference>
<dbReference type="NCBIfam" id="NF003623">
    <property type="entry name" value="PRK05265.1-1"/>
    <property type="match status" value="1"/>
</dbReference>
<dbReference type="NCBIfam" id="NF003624">
    <property type="entry name" value="PRK05265.1-2"/>
    <property type="match status" value="1"/>
</dbReference>
<dbReference type="NCBIfam" id="NF003625">
    <property type="entry name" value="PRK05265.1-3"/>
    <property type="match status" value="1"/>
</dbReference>
<dbReference type="NCBIfam" id="NF003627">
    <property type="entry name" value="PRK05265.1-5"/>
    <property type="match status" value="1"/>
</dbReference>
<dbReference type="PANTHER" id="PTHR30456">
    <property type="entry name" value="PYRIDOXINE 5'-PHOSPHATE SYNTHASE"/>
    <property type="match status" value="1"/>
</dbReference>
<dbReference type="PANTHER" id="PTHR30456:SF0">
    <property type="entry name" value="PYRIDOXINE 5'-PHOSPHATE SYNTHASE"/>
    <property type="match status" value="1"/>
</dbReference>
<dbReference type="Pfam" id="PF03740">
    <property type="entry name" value="PdxJ"/>
    <property type="match status" value="1"/>
</dbReference>
<dbReference type="SUPFAM" id="SSF63892">
    <property type="entry name" value="Pyridoxine 5'-phosphate synthase"/>
    <property type="match status" value="1"/>
</dbReference>